<protein>
    <recommendedName>
        <fullName evidence="1">Dihydroorotate dehydrogenase (quinone)</fullName>
        <ecNumber evidence="1">1.3.5.2</ecNumber>
    </recommendedName>
    <alternativeName>
        <fullName evidence="1">DHOdehase</fullName>
        <shortName evidence="1">DHOD</shortName>
        <shortName evidence="1">DHODase</shortName>
    </alternativeName>
    <alternativeName>
        <fullName evidence="1">Dihydroorotate oxidase</fullName>
    </alternativeName>
</protein>
<comment type="function">
    <text evidence="1">Catalyzes the conversion of dihydroorotate to orotate with quinone as electron acceptor.</text>
</comment>
<comment type="catalytic activity">
    <reaction evidence="1">
        <text>(S)-dihydroorotate + a quinone = orotate + a quinol</text>
        <dbReference type="Rhea" id="RHEA:30187"/>
        <dbReference type="ChEBI" id="CHEBI:24646"/>
        <dbReference type="ChEBI" id="CHEBI:30839"/>
        <dbReference type="ChEBI" id="CHEBI:30864"/>
        <dbReference type="ChEBI" id="CHEBI:132124"/>
        <dbReference type="EC" id="1.3.5.2"/>
    </reaction>
</comment>
<comment type="cofactor">
    <cofactor evidence="1">
        <name>FMN</name>
        <dbReference type="ChEBI" id="CHEBI:58210"/>
    </cofactor>
    <text evidence="1">Binds 1 FMN per subunit.</text>
</comment>
<comment type="pathway">
    <text evidence="1">Pyrimidine metabolism; UMP biosynthesis via de novo pathway; orotate from (S)-dihydroorotate (quinone route): step 1/1.</text>
</comment>
<comment type="subunit">
    <text evidence="1">Monomer.</text>
</comment>
<comment type="subcellular location">
    <subcellularLocation>
        <location evidence="1">Cell membrane</location>
        <topology evidence="1">Peripheral membrane protein</topology>
    </subcellularLocation>
</comment>
<comment type="similarity">
    <text evidence="1">Belongs to the dihydroorotate dehydrogenase family. Type 2 subfamily.</text>
</comment>
<reference key="1">
    <citation type="journal article" date="2009" name="Genome Biol.">
        <title>Genomic and genetic analyses of diversity and plant interactions of Pseudomonas fluorescens.</title>
        <authorList>
            <person name="Silby M.W."/>
            <person name="Cerdeno-Tarraga A.M."/>
            <person name="Vernikos G.S."/>
            <person name="Giddens S.R."/>
            <person name="Jackson R.W."/>
            <person name="Preston G.M."/>
            <person name="Zhang X.-X."/>
            <person name="Moon C.D."/>
            <person name="Gehrig S.M."/>
            <person name="Godfrey S.A.C."/>
            <person name="Knight C.G."/>
            <person name="Malone J.G."/>
            <person name="Robinson Z."/>
            <person name="Spiers A.J."/>
            <person name="Harris S."/>
            <person name="Challis G.L."/>
            <person name="Yaxley A.M."/>
            <person name="Harris D."/>
            <person name="Seeger K."/>
            <person name="Murphy L."/>
            <person name="Rutter S."/>
            <person name="Squares R."/>
            <person name="Quail M.A."/>
            <person name="Saunders E."/>
            <person name="Mavromatis K."/>
            <person name="Brettin T.S."/>
            <person name="Bentley S.D."/>
            <person name="Hothersall J."/>
            <person name="Stephens E."/>
            <person name="Thomas C.M."/>
            <person name="Parkhill J."/>
            <person name="Levy S.B."/>
            <person name="Rainey P.B."/>
            <person name="Thomson N.R."/>
        </authorList>
    </citation>
    <scope>NUCLEOTIDE SEQUENCE [LARGE SCALE GENOMIC DNA]</scope>
    <source>
        <strain>Pf0-1</strain>
    </source>
</reference>
<evidence type="ECO:0000255" key="1">
    <source>
        <dbReference type="HAMAP-Rule" id="MF_00225"/>
    </source>
</evidence>
<keyword id="KW-1003">Cell membrane</keyword>
<keyword id="KW-0285">Flavoprotein</keyword>
<keyword id="KW-0288">FMN</keyword>
<keyword id="KW-0472">Membrane</keyword>
<keyword id="KW-0560">Oxidoreductase</keyword>
<keyword id="KW-0665">Pyrimidine biosynthesis</keyword>
<gene>
    <name evidence="1" type="primary">pyrD</name>
    <name type="ordered locus">Pfl01_1786</name>
</gene>
<accession>Q3KFC7</accession>
<feature type="chain" id="PRO_1000024204" description="Dihydroorotate dehydrogenase (quinone)">
    <location>
        <begin position="1"/>
        <end position="339"/>
    </location>
</feature>
<feature type="active site" description="Nucleophile" evidence="1">
    <location>
        <position position="174"/>
    </location>
</feature>
<feature type="binding site" evidence="1">
    <location>
        <begin position="61"/>
        <end position="65"/>
    </location>
    <ligand>
        <name>FMN</name>
        <dbReference type="ChEBI" id="CHEBI:58210"/>
    </ligand>
</feature>
<feature type="binding site" evidence="1">
    <location>
        <position position="65"/>
    </location>
    <ligand>
        <name>substrate</name>
    </ligand>
</feature>
<feature type="binding site" evidence="1">
    <location>
        <position position="85"/>
    </location>
    <ligand>
        <name>FMN</name>
        <dbReference type="ChEBI" id="CHEBI:58210"/>
    </ligand>
</feature>
<feature type="binding site" evidence="1">
    <location>
        <begin position="110"/>
        <end position="114"/>
    </location>
    <ligand>
        <name>substrate</name>
    </ligand>
</feature>
<feature type="binding site" evidence="1">
    <location>
        <position position="138"/>
    </location>
    <ligand>
        <name>FMN</name>
        <dbReference type="ChEBI" id="CHEBI:58210"/>
    </ligand>
</feature>
<feature type="binding site" evidence="1">
    <location>
        <position position="171"/>
    </location>
    <ligand>
        <name>FMN</name>
        <dbReference type="ChEBI" id="CHEBI:58210"/>
    </ligand>
</feature>
<feature type="binding site" evidence="1">
    <location>
        <position position="171"/>
    </location>
    <ligand>
        <name>substrate</name>
    </ligand>
</feature>
<feature type="binding site" evidence="1">
    <location>
        <position position="176"/>
    </location>
    <ligand>
        <name>substrate</name>
    </ligand>
</feature>
<feature type="binding site" evidence="1">
    <location>
        <position position="216"/>
    </location>
    <ligand>
        <name>FMN</name>
        <dbReference type="ChEBI" id="CHEBI:58210"/>
    </ligand>
</feature>
<feature type="binding site" evidence="1">
    <location>
        <position position="244"/>
    </location>
    <ligand>
        <name>FMN</name>
        <dbReference type="ChEBI" id="CHEBI:58210"/>
    </ligand>
</feature>
<feature type="binding site" evidence="1">
    <location>
        <begin position="245"/>
        <end position="246"/>
    </location>
    <ligand>
        <name>substrate</name>
    </ligand>
</feature>
<feature type="binding site" evidence="1">
    <location>
        <position position="267"/>
    </location>
    <ligand>
        <name>FMN</name>
        <dbReference type="ChEBI" id="CHEBI:58210"/>
    </ligand>
</feature>
<feature type="binding site" evidence="1">
    <location>
        <position position="296"/>
    </location>
    <ligand>
        <name>FMN</name>
        <dbReference type="ChEBI" id="CHEBI:58210"/>
    </ligand>
</feature>
<feature type="binding site" evidence="1">
    <location>
        <begin position="317"/>
        <end position="318"/>
    </location>
    <ligand>
        <name>FMN</name>
        <dbReference type="ChEBI" id="CHEBI:58210"/>
    </ligand>
</feature>
<name>PYRD_PSEPF</name>
<dbReference type="EC" id="1.3.5.2" evidence="1"/>
<dbReference type="EMBL" id="CP000094">
    <property type="protein sequence ID" value="ABA73529.1"/>
    <property type="molecule type" value="Genomic_DNA"/>
</dbReference>
<dbReference type="RefSeq" id="WP_011333259.1">
    <property type="nucleotide sequence ID" value="NC_007492.2"/>
</dbReference>
<dbReference type="SMR" id="Q3KFC7"/>
<dbReference type="KEGG" id="pfo:Pfl01_1786"/>
<dbReference type="eggNOG" id="COG0167">
    <property type="taxonomic scope" value="Bacteria"/>
</dbReference>
<dbReference type="HOGENOM" id="CLU_013640_2_0_6"/>
<dbReference type="UniPathway" id="UPA00070">
    <property type="reaction ID" value="UER00946"/>
</dbReference>
<dbReference type="Proteomes" id="UP000002704">
    <property type="component" value="Chromosome"/>
</dbReference>
<dbReference type="GO" id="GO:0005737">
    <property type="term" value="C:cytoplasm"/>
    <property type="evidence" value="ECO:0007669"/>
    <property type="project" value="InterPro"/>
</dbReference>
<dbReference type="GO" id="GO:0005886">
    <property type="term" value="C:plasma membrane"/>
    <property type="evidence" value="ECO:0007669"/>
    <property type="project" value="UniProtKB-SubCell"/>
</dbReference>
<dbReference type="GO" id="GO:0106430">
    <property type="term" value="F:dihydroorotate dehydrogenase (quinone) activity"/>
    <property type="evidence" value="ECO:0007669"/>
    <property type="project" value="UniProtKB-EC"/>
</dbReference>
<dbReference type="GO" id="GO:0006207">
    <property type="term" value="P:'de novo' pyrimidine nucleobase biosynthetic process"/>
    <property type="evidence" value="ECO:0007669"/>
    <property type="project" value="InterPro"/>
</dbReference>
<dbReference type="GO" id="GO:0044205">
    <property type="term" value="P:'de novo' UMP biosynthetic process"/>
    <property type="evidence" value="ECO:0007669"/>
    <property type="project" value="UniProtKB-UniRule"/>
</dbReference>
<dbReference type="CDD" id="cd04738">
    <property type="entry name" value="DHOD_2_like"/>
    <property type="match status" value="1"/>
</dbReference>
<dbReference type="FunFam" id="3.20.20.70:FF:000028">
    <property type="entry name" value="Dihydroorotate dehydrogenase (quinone)"/>
    <property type="match status" value="1"/>
</dbReference>
<dbReference type="Gene3D" id="3.20.20.70">
    <property type="entry name" value="Aldolase class I"/>
    <property type="match status" value="1"/>
</dbReference>
<dbReference type="HAMAP" id="MF_00225">
    <property type="entry name" value="DHO_dh_type2"/>
    <property type="match status" value="1"/>
</dbReference>
<dbReference type="InterPro" id="IPR013785">
    <property type="entry name" value="Aldolase_TIM"/>
</dbReference>
<dbReference type="InterPro" id="IPR050074">
    <property type="entry name" value="DHO_dehydrogenase"/>
</dbReference>
<dbReference type="InterPro" id="IPR012135">
    <property type="entry name" value="Dihydroorotate_DH_1_2"/>
</dbReference>
<dbReference type="InterPro" id="IPR005719">
    <property type="entry name" value="Dihydroorotate_DH_2"/>
</dbReference>
<dbReference type="InterPro" id="IPR005720">
    <property type="entry name" value="Dihydroorotate_DH_cat"/>
</dbReference>
<dbReference type="InterPro" id="IPR001295">
    <property type="entry name" value="Dihydroorotate_DH_CS"/>
</dbReference>
<dbReference type="NCBIfam" id="NF003644">
    <property type="entry name" value="PRK05286.1-1"/>
    <property type="match status" value="1"/>
</dbReference>
<dbReference type="NCBIfam" id="NF003645">
    <property type="entry name" value="PRK05286.1-2"/>
    <property type="match status" value="1"/>
</dbReference>
<dbReference type="NCBIfam" id="NF003646">
    <property type="entry name" value="PRK05286.1-4"/>
    <property type="match status" value="1"/>
</dbReference>
<dbReference type="NCBIfam" id="NF003652">
    <property type="entry name" value="PRK05286.2-5"/>
    <property type="match status" value="1"/>
</dbReference>
<dbReference type="NCBIfam" id="TIGR01036">
    <property type="entry name" value="pyrD_sub2"/>
    <property type="match status" value="1"/>
</dbReference>
<dbReference type="PANTHER" id="PTHR48109:SF4">
    <property type="entry name" value="DIHYDROOROTATE DEHYDROGENASE (QUINONE), MITOCHONDRIAL"/>
    <property type="match status" value="1"/>
</dbReference>
<dbReference type="PANTHER" id="PTHR48109">
    <property type="entry name" value="DIHYDROOROTATE DEHYDROGENASE (QUINONE), MITOCHONDRIAL-RELATED"/>
    <property type="match status" value="1"/>
</dbReference>
<dbReference type="Pfam" id="PF01180">
    <property type="entry name" value="DHO_dh"/>
    <property type="match status" value="1"/>
</dbReference>
<dbReference type="PIRSF" id="PIRSF000164">
    <property type="entry name" value="DHO_oxidase"/>
    <property type="match status" value="1"/>
</dbReference>
<dbReference type="SUPFAM" id="SSF51395">
    <property type="entry name" value="FMN-linked oxidoreductases"/>
    <property type="match status" value="1"/>
</dbReference>
<dbReference type="PROSITE" id="PS00911">
    <property type="entry name" value="DHODEHASE_1"/>
    <property type="match status" value="1"/>
</dbReference>
<sequence length="339" mass="35585">MYTLARQLLFKLSPETSHDLSLDLIGAGGRLGLNGLLCKAPASLPVNVMGLQFPNPVGLAAGLDKNGAAIDGFAQLGFGFVEIGTVTPRPQPGNPKPRIFRLPEAEAIINRMGFNNLGVDNLLARVAAAKYKGVLGINIGKNFDTPVERAVDDYLICLDKVYAHASYVTVNVSSPNTPGLRSLQFGDSLKQLLADLATRRAELALRHGKHVPLAIKIAPDMTDEETAQVAQALIETGMDAVIATNTTLSRVGVEGMEHGDEAGGLSGAPVREKSTHTVKVLASELGGKLPIIAAGGITEGKHAAEKIAAGASLVQIYSGFIYKGPALIRESVDAIAAKR</sequence>
<organism>
    <name type="scientific">Pseudomonas fluorescens (strain Pf0-1)</name>
    <dbReference type="NCBI Taxonomy" id="205922"/>
    <lineage>
        <taxon>Bacteria</taxon>
        <taxon>Pseudomonadati</taxon>
        <taxon>Pseudomonadota</taxon>
        <taxon>Gammaproteobacteria</taxon>
        <taxon>Pseudomonadales</taxon>
        <taxon>Pseudomonadaceae</taxon>
        <taxon>Pseudomonas</taxon>
    </lineage>
</organism>
<proteinExistence type="inferred from homology"/>